<feature type="initiator methionine" description="Removed" evidence="2">
    <location>
        <position position="1"/>
    </location>
</feature>
<feature type="chain" id="PRO_0000205846" description="Nicotinate phosphoribosyltransferase">
    <location>
        <begin position="2"/>
        <end position="400"/>
    </location>
</feature>
<feature type="modified residue" description="Phosphohistidine; by autocatalysis" evidence="4 5">
    <location>
        <position position="220"/>
    </location>
</feature>
<feature type="mutagenesis site" description="Loss of ATP hydrolysis and autophosphorylation." evidence="5">
    <original>H</original>
    <variation>E</variation>
    <variation>N</variation>
    <location>
        <position position="220"/>
    </location>
</feature>
<evidence type="ECO:0000255" key="1">
    <source>
        <dbReference type="HAMAP-Rule" id="MF_00570"/>
    </source>
</evidence>
<evidence type="ECO:0000269" key="2">
    <source>
    </source>
</evidence>
<evidence type="ECO:0000269" key="3">
    <source>
    </source>
</evidence>
<evidence type="ECO:0000269" key="4">
    <source>
    </source>
</evidence>
<evidence type="ECO:0000269" key="5">
    <source>
    </source>
</evidence>
<evidence type="ECO:0000269" key="6">
    <source>
    </source>
</evidence>
<comment type="function">
    <text evidence="1 2 3 5 6">Catalyzes the synthesis of beta-nicotinate D-ribonucleotide from nicotinate and 5-phospho-D-ribose 1-phosphate at the expense of ATP.</text>
</comment>
<comment type="catalytic activity">
    <reaction evidence="1 3 5 6">
        <text>nicotinate + 5-phospho-alpha-D-ribose 1-diphosphate + ATP + H2O = nicotinate beta-D-ribonucleotide + ADP + phosphate + diphosphate</text>
        <dbReference type="Rhea" id="RHEA:36163"/>
        <dbReference type="ChEBI" id="CHEBI:15377"/>
        <dbReference type="ChEBI" id="CHEBI:30616"/>
        <dbReference type="ChEBI" id="CHEBI:32544"/>
        <dbReference type="ChEBI" id="CHEBI:33019"/>
        <dbReference type="ChEBI" id="CHEBI:43474"/>
        <dbReference type="ChEBI" id="CHEBI:57502"/>
        <dbReference type="ChEBI" id="CHEBI:58017"/>
        <dbReference type="ChEBI" id="CHEBI:456216"/>
        <dbReference type="EC" id="6.3.4.21"/>
    </reaction>
</comment>
<comment type="biophysicochemical properties">
    <kinetics>
        <KM evidence="3">1.5 uM for nicotinate in the presence of ATP</KM>
        <KM evidence="3 5">0.3 mM for nicotinate in the absence of ATP</KM>
        <KM evidence="3">22 uM for 5-phospho-alpha-D-ribose 1-diphosphate in the presence of ATP</KM>
        <KM evidence="3 5">4.5 mM for 5-phospho-alpha-D-ribose 1-diphosphate in the absence of ATP</KM>
    </kinetics>
</comment>
<comment type="pathway">
    <text evidence="1 2 6">Cofactor biosynthesis; NAD(+) biosynthesis; nicotinate D-ribonucleotide from nicotinate: step 1/1.</text>
</comment>
<comment type="PTM">
    <text evidence="3 5 6">Transiently phosphorylated on a His residue during the reaction cycle (PubMed:9521740). Phosphorylation strongly increases the affinity for substrates and increases the rate of nicotinate D-ribonucleotide production. Dephosphorylation regenerates the low-affinity form of the enzyme, leading to product release (PubMed:7503993, PubMed:9521740, PubMed:9521741).</text>
</comment>
<comment type="similarity">
    <text evidence="1">Belongs to the NAPRTase family.</text>
</comment>
<name>PNCB_SALTY</name>
<proteinExistence type="evidence at protein level"/>
<protein>
    <recommendedName>
        <fullName evidence="1">Nicotinate phosphoribosyltransferase</fullName>
        <shortName evidence="1">NAPRTase</shortName>
        <ecNumber evidence="1 3 5 6">6.3.4.21</ecNumber>
    </recommendedName>
</protein>
<reference key="1">
    <citation type="journal article" date="1991" name="J. Bacteriol.">
        <title>Cloning and nucleic acid sequence of the Salmonella typhimurium pncB gene and structure of nicotinate phosphoribosyltransferase.</title>
        <authorList>
            <person name="Vinitsky A."/>
            <person name="Teng H."/>
            <person name="Grubmeyer C.T."/>
        </authorList>
    </citation>
    <scope>NUCLEOTIDE SEQUENCE [GENOMIC DNA]</scope>
    <scope>PARTIAL PROTEIN SEQUENCE</scope>
    <scope>FUNCTION</scope>
    <scope>PATHWAY</scope>
</reference>
<reference key="2">
    <citation type="journal article" date="2001" name="Nature">
        <title>Complete genome sequence of Salmonella enterica serovar Typhimurium LT2.</title>
        <authorList>
            <person name="McClelland M."/>
            <person name="Sanderson K.E."/>
            <person name="Spieth J."/>
            <person name="Clifton S.W."/>
            <person name="Latreille P."/>
            <person name="Courtney L."/>
            <person name="Porwollik S."/>
            <person name="Ali J."/>
            <person name="Dante M."/>
            <person name="Du F."/>
            <person name="Hou S."/>
            <person name="Layman D."/>
            <person name="Leonard S."/>
            <person name="Nguyen C."/>
            <person name="Scott K."/>
            <person name="Holmes A."/>
            <person name="Grewal N."/>
            <person name="Mulvaney E."/>
            <person name="Ryan E."/>
            <person name="Sun H."/>
            <person name="Florea L."/>
            <person name="Miller W."/>
            <person name="Stoneking T."/>
            <person name="Nhan M."/>
            <person name="Waterston R."/>
            <person name="Wilson R.K."/>
        </authorList>
    </citation>
    <scope>NUCLEOTIDE SEQUENCE [LARGE SCALE GENOMIC DNA]</scope>
    <source>
        <strain>LT2 / SGSC1412 / ATCC 700720</strain>
    </source>
</reference>
<reference key="3">
    <citation type="journal article" date="1993" name="J. Biol. Chem.">
        <title>A new paradigm for biochemical energy coupling. Salmonella typhimurium nicotinate phosphoribosyltransferase.</title>
        <authorList>
            <person name="Vinitsky A."/>
            <person name="Grubmeyer C."/>
        </authorList>
    </citation>
    <scope>FUNCTION</scope>
    <scope>CATALYTIC ACTIVITY</scope>
    <scope>BIOPHYSICOCHEMICAL PROPERTIES</scope>
    <scope>PHOSPHORYLATION</scope>
</reference>
<reference key="4">
    <citation type="journal article" date="1996" name="Biochemistry">
        <title>Energy coupling in Salmonella typhimurium nicotinic acid phosphoribosyltransferase: identification of His-219 as site of phosphorylation.</title>
        <authorList>
            <person name="Gross J."/>
            <person name="Rajavel M."/>
            <person name="Segura E."/>
            <person name="Grubmeyer C."/>
        </authorList>
    </citation>
    <scope>PHOSPHORYLATION AT HIS-220</scope>
    <scope>PARTIAL PROTEIN SEQUENCE</scope>
</reference>
<reference key="5">
    <citation type="journal article" date="1998" name="Biochemistry">
        <title>Conversion of a cosubstrate to an inhibitor: phosphorylation mutants of nicotinic acid phosphoribosyltransferase.</title>
        <authorList>
            <person name="Rajavel M."/>
            <person name="Lalo D."/>
            <person name="Gross J.W."/>
            <person name="Grubmeyer C."/>
        </authorList>
    </citation>
    <scope>FUNCTION</scope>
    <scope>CATALYTIC ACTIVITY</scope>
    <scope>MUTAGENESIS OF HIS-220</scope>
    <scope>BIOPHYSICOCHEMICAL PROPERTIES</scope>
    <scope>PHOSPHORYLATION AT HIS-220</scope>
</reference>
<reference key="6">
    <citation type="journal article" date="1998" name="Biochemistry">
        <title>Kinetic mechanism of nicotinic acid phosphoribosyltransferase: implications for energy coupling.</title>
        <authorList>
            <person name="Gross J.W."/>
            <person name="Rajavel M."/>
            <person name="Grubmeyer C."/>
        </authorList>
    </citation>
    <scope>FUNCTION</scope>
    <scope>CATALYTIC ACTIVITY</scope>
    <scope>PHOSPHORYLATION</scope>
    <scope>PATHWAY</scope>
</reference>
<gene>
    <name evidence="1" type="primary">pncB</name>
    <name type="ordered locus">STM1004</name>
</gene>
<keyword id="KW-0903">Direct protein sequencing</keyword>
<keyword id="KW-0436">Ligase</keyword>
<keyword id="KW-0455">Luminescence</keyword>
<keyword id="KW-0597">Phosphoprotein</keyword>
<keyword id="KW-0599">Photoprotein</keyword>
<keyword id="KW-0662">Pyridine nucleotide biosynthesis</keyword>
<keyword id="KW-1185">Reference proteome</keyword>
<accession>P22253</accession>
<sequence length="400" mass="45661">MTQFASPVLHSLLDTDAYKLHMQQAVFHHYYDVQVAAEFRCRGDDLLGIYADAIREQVDAMQHLRLLEDEFQWLSGLPFFKPDYLNWLREFRYNPAQVCVTNDNGKLNIRLTGPWREVIMWEVPLLAVISELVHHYRSPNAGVDQALDALESKLVDFTALTANLDMSRFHLMDFGTRRRFSREVQQAIVKRLQQESWFVGTSNYDLARRLALTPMGTQAHEWFQAHQQISPDLATSQRAALAAWLNEYPDQLGIALTDCITMDAFLRDFGIEFASRYQGLRHDSGDPVAWGEKAIAHYEKLGIDPLTKTLVFSDNLDLPKAVELYRHFASRVQLSFGIGTRLTCDIPQVKPLNIVIKLVECNGKPVAKLSDSPGKTICHDKAFVRALRKAFDLPQVRKAS</sequence>
<dbReference type="EC" id="6.3.4.21" evidence="1 3 5 6"/>
<dbReference type="EMBL" id="M55986">
    <property type="protein sequence ID" value="AAA27190.1"/>
    <property type="molecule type" value="Genomic_DNA"/>
</dbReference>
<dbReference type="EMBL" id="AE006468">
    <property type="protein sequence ID" value="AAL19938.1"/>
    <property type="molecule type" value="Genomic_DNA"/>
</dbReference>
<dbReference type="PIR" id="A39130">
    <property type="entry name" value="A39130"/>
</dbReference>
<dbReference type="RefSeq" id="NP_459979.1">
    <property type="nucleotide sequence ID" value="NC_003197.2"/>
</dbReference>
<dbReference type="RefSeq" id="WP_000191399.1">
    <property type="nucleotide sequence ID" value="NC_003197.2"/>
</dbReference>
<dbReference type="SMR" id="P22253"/>
<dbReference type="STRING" id="99287.STM1004"/>
<dbReference type="iPTMnet" id="P22253"/>
<dbReference type="PaxDb" id="99287-STM1004"/>
<dbReference type="GeneID" id="1252522"/>
<dbReference type="KEGG" id="stm:STM1004"/>
<dbReference type="PATRIC" id="fig|99287.12.peg.1061"/>
<dbReference type="HOGENOM" id="CLU_030991_1_0_6"/>
<dbReference type="OMA" id="IEHCLEY"/>
<dbReference type="PhylomeDB" id="P22253"/>
<dbReference type="BioCyc" id="SENT99287:STM1004-MONOMER"/>
<dbReference type="BRENDA" id="6.3.4.21">
    <property type="organism ID" value="5542"/>
</dbReference>
<dbReference type="UniPathway" id="UPA00253">
    <property type="reaction ID" value="UER00457"/>
</dbReference>
<dbReference type="Proteomes" id="UP000001014">
    <property type="component" value="Chromosome"/>
</dbReference>
<dbReference type="GO" id="GO:0005829">
    <property type="term" value="C:cytosol"/>
    <property type="evidence" value="ECO:0000318"/>
    <property type="project" value="GO_Central"/>
</dbReference>
<dbReference type="GO" id="GO:0004516">
    <property type="term" value="F:nicotinate phosphoribosyltransferase activity"/>
    <property type="evidence" value="ECO:0000318"/>
    <property type="project" value="GO_Central"/>
</dbReference>
<dbReference type="GO" id="GO:0008218">
    <property type="term" value="P:bioluminescence"/>
    <property type="evidence" value="ECO:0007669"/>
    <property type="project" value="UniProtKB-KW"/>
</dbReference>
<dbReference type="GO" id="GO:0034355">
    <property type="term" value="P:NAD biosynthetic process via the salvage pathway"/>
    <property type="evidence" value="ECO:0000318"/>
    <property type="project" value="GO_Central"/>
</dbReference>
<dbReference type="CDD" id="cd01401">
    <property type="entry name" value="PncB_like"/>
    <property type="match status" value="1"/>
</dbReference>
<dbReference type="FunFam" id="3.20.140.10:FF:000001">
    <property type="entry name" value="Nicotinate phosphoribosyltransferase"/>
    <property type="match status" value="1"/>
</dbReference>
<dbReference type="Gene3D" id="3.20.140.10">
    <property type="entry name" value="nicotinate phosphoribosyltransferase"/>
    <property type="match status" value="1"/>
</dbReference>
<dbReference type="HAMAP" id="MF_00570">
    <property type="entry name" value="NAPRTase"/>
    <property type="match status" value="1"/>
</dbReference>
<dbReference type="InterPro" id="IPR041525">
    <property type="entry name" value="N/Namide_PRibTrfase"/>
</dbReference>
<dbReference type="InterPro" id="IPR040727">
    <property type="entry name" value="NAPRTase_N"/>
</dbReference>
<dbReference type="InterPro" id="IPR006406">
    <property type="entry name" value="Nic_PRibTrfase"/>
</dbReference>
<dbReference type="InterPro" id="IPR007229">
    <property type="entry name" value="Nic_PRibTrfase-Fam"/>
</dbReference>
<dbReference type="InterPro" id="IPR036068">
    <property type="entry name" value="Nicotinate_pribotase-like_C"/>
</dbReference>
<dbReference type="NCBIfam" id="TIGR01514">
    <property type="entry name" value="NAPRTase"/>
    <property type="match status" value="1"/>
</dbReference>
<dbReference type="NCBIfam" id="NF003704">
    <property type="entry name" value="PRK05321.1"/>
    <property type="match status" value="1"/>
</dbReference>
<dbReference type="PANTHER" id="PTHR11098">
    <property type="entry name" value="NICOTINATE PHOSPHORIBOSYLTRANSFERASE"/>
    <property type="match status" value="1"/>
</dbReference>
<dbReference type="PANTHER" id="PTHR11098:SF1">
    <property type="entry name" value="NICOTINATE PHOSPHORIBOSYLTRANSFERASE"/>
    <property type="match status" value="1"/>
</dbReference>
<dbReference type="Pfam" id="PF04095">
    <property type="entry name" value="NAPRTase"/>
    <property type="match status" value="1"/>
</dbReference>
<dbReference type="Pfam" id="PF17767">
    <property type="entry name" value="NAPRTase_N"/>
    <property type="match status" value="1"/>
</dbReference>
<dbReference type="PIRSF" id="PIRSF000484">
    <property type="entry name" value="NAPRT"/>
    <property type="match status" value="1"/>
</dbReference>
<dbReference type="SUPFAM" id="SSF51690">
    <property type="entry name" value="Nicotinate/Quinolinate PRTase C-terminal domain-like"/>
    <property type="match status" value="1"/>
</dbReference>
<dbReference type="SUPFAM" id="SSF54675">
    <property type="entry name" value="Nicotinate/Quinolinate PRTase N-terminal domain-like"/>
    <property type="match status" value="1"/>
</dbReference>
<organism>
    <name type="scientific">Salmonella typhimurium (strain LT2 / SGSC1412 / ATCC 700720)</name>
    <dbReference type="NCBI Taxonomy" id="99287"/>
    <lineage>
        <taxon>Bacteria</taxon>
        <taxon>Pseudomonadati</taxon>
        <taxon>Pseudomonadota</taxon>
        <taxon>Gammaproteobacteria</taxon>
        <taxon>Enterobacterales</taxon>
        <taxon>Enterobacteriaceae</taxon>
        <taxon>Salmonella</taxon>
    </lineage>
</organism>